<evidence type="ECO:0000255" key="1">
    <source>
        <dbReference type="HAMAP-Rule" id="MF_00495"/>
    </source>
</evidence>
<sequence length="230" mass="25142">MDKQLLIFDFDGTLIDSVPDLADAVNAMLTTLGKAPYPIDTIRNWVGNGSRMLVERALVGKIEVSEGELAKETIDHAEQVFFDAYSKMGGSKTVAYPNVDSGLKKLKAAGFKLALVTNKPIRFVPKILQFFGWHDIFSEVLGGDSLPTKKPDPAPLLHVCEVLNINPAQAVMIGDSINDILAGQNANMDTLGLSYGYNYGQDIRQLNPTEAFDDFSALVDYLLKAYPANN</sequence>
<accession>Q4FPT7</accession>
<feature type="chain" id="PRO_0000238172" description="Phosphoglycolate phosphatase">
    <location>
        <begin position="1"/>
        <end position="230"/>
    </location>
</feature>
<feature type="active site" description="Nucleophile" evidence="1">
    <location>
        <position position="9"/>
    </location>
</feature>
<feature type="binding site" evidence="1">
    <location>
        <position position="9"/>
    </location>
    <ligand>
        <name>Mg(2+)</name>
        <dbReference type="ChEBI" id="CHEBI:18420"/>
    </ligand>
</feature>
<feature type="binding site" evidence="1">
    <location>
        <position position="11"/>
    </location>
    <ligand>
        <name>Mg(2+)</name>
        <dbReference type="ChEBI" id="CHEBI:18420"/>
    </ligand>
</feature>
<feature type="binding site" evidence="1">
    <location>
        <position position="175"/>
    </location>
    <ligand>
        <name>Mg(2+)</name>
        <dbReference type="ChEBI" id="CHEBI:18420"/>
    </ligand>
</feature>
<proteinExistence type="inferred from homology"/>
<keyword id="KW-0119">Carbohydrate metabolism</keyword>
<keyword id="KW-0378">Hydrolase</keyword>
<keyword id="KW-0460">Magnesium</keyword>
<keyword id="KW-0479">Metal-binding</keyword>
<keyword id="KW-1185">Reference proteome</keyword>
<protein>
    <recommendedName>
        <fullName evidence="1">Phosphoglycolate phosphatase</fullName>
        <shortName evidence="1">PGP</shortName>
        <shortName evidence="1">PGPase</shortName>
        <ecNumber evidence="1">3.1.3.18</ecNumber>
    </recommendedName>
</protein>
<name>GPH_PSYA2</name>
<gene>
    <name type="ordered locus">Psyc_2124</name>
</gene>
<dbReference type="EC" id="3.1.3.18" evidence="1"/>
<dbReference type="EMBL" id="CP000082">
    <property type="protein sequence ID" value="AAZ19971.1"/>
    <property type="molecule type" value="Genomic_DNA"/>
</dbReference>
<dbReference type="RefSeq" id="WP_011281377.1">
    <property type="nucleotide sequence ID" value="NC_007204.1"/>
</dbReference>
<dbReference type="SMR" id="Q4FPT7"/>
<dbReference type="STRING" id="259536.Psyc_2124"/>
<dbReference type="KEGG" id="par:Psyc_2124"/>
<dbReference type="eggNOG" id="COG0546">
    <property type="taxonomic scope" value="Bacteria"/>
</dbReference>
<dbReference type="HOGENOM" id="CLU_045011_19_1_6"/>
<dbReference type="OrthoDB" id="9776368at2"/>
<dbReference type="UniPathway" id="UPA00865">
    <property type="reaction ID" value="UER00834"/>
</dbReference>
<dbReference type="Proteomes" id="UP000000546">
    <property type="component" value="Chromosome"/>
</dbReference>
<dbReference type="GO" id="GO:0005829">
    <property type="term" value="C:cytosol"/>
    <property type="evidence" value="ECO:0007669"/>
    <property type="project" value="TreeGrafter"/>
</dbReference>
<dbReference type="GO" id="GO:0046872">
    <property type="term" value="F:metal ion binding"/>
    <property type="evidence" value="ECO:0007669"/>
    <property type="project" value="UniProtKB-KW"/>
</dbReference>
<dbReference type="GO" id="GO:0008967">
    <property type="term" value="F:phosphoglycolate phosphatase activity"/>
    <property type="evidence" value="ECO:0007669"/>
    <property type="project" value="UniProtKB-UniRule"/>
</dbReference>
<dbReference type="GO" id="GO:0005975">
    <property type="term" value="P:carbohydrate metabolic process"/>
    <property type="evidence" value="ECO:0007669"/>
    <property type="project" value="InterPro"/>
</dbReference>
<dbReference type="GO" id="GO:0006281">
    <property type="term" value="P:DNA repair"/>
    <property type="evidence" value="ECO:0007669"/>
    <property type="project" value="TreeGrafter"/>
</dbReference>
<dbReference type="GO" id="GO:0046295">
    <property type="term" value="P:glycolate biosynthetic process"/>
    <property type="evidence" value="ECO:0007669"/>
    <property type="project" value="UniProtKB-UniRule"/>
</dbReference>
<dbReference type="CDD" id="cd16417">
    <property type="entry name" value="HAD_PGPase"/>
    <property type="match status" value="1"/>
</dbReference>
<dbReference type="FunFam" id="3.40.50.1000:FF:000022">
    <property type="entry name" value="Phosphoglycolate phosphatase"/>
    <property type="match status" value="1"/>
</dbReference>
<dbReference type="Gene3D" id="3.40.50.1000">
    <property type="entry name" value="HAD superfamily/HAD-like"/>
    <property type="match status" value="1"/>
</dbReference>
<dbReference type="Gene3D" id="1.10.150.240">
    <property type="entry name" value="Putative phosphatase, domain 2"/>
    <property type="match status" value="1"/>
</dbReference>
<dbReference type="HAMAP" id="MF_00495">
    <property type="entry name" value="GPH_hydrolase_bact"/>
    <property type="match status" value="1"/>
</dbReference>
<dbReference type="InterPro" id="IPR050155">
    <property type="entry name" value="HAD-like_hydrolase_sf"/>
</dbReference>
<dbReference type="InterPro" id="IPR036412">
    <property type="entry name" value="HAD-like_sf"/>
</dbReference>
<dbReference type="InterPro" id="IPR006439">
    <property type="entry name" value="HAD-SF_hydro_IA"/>
</dbReference>
<dbReference type="InterPro" id="IPR041492">
    <property type="entry name" value="HAD_2"/>
</dbReference>
<dbReference type="InterPro" id="IPR023214">
    <property type="entry name" value="HAD_sf"/>
</dbReference>
<dbReference type="InterPro" id="IPR023198">
    <property type="entry name" value="PGP-like_dom2"/>
</dbReference>
<dbReference type="InterPro" id="IPR037512">
    <property type="entry name" value="PGPase_prok"/>
</dbReference>
<dbReference type="NCBIfam" id="TIGR01549">
    <property type="entry name" value="HAD-SF-IA-v1"/>
    <property type="match status" value="1"/>
</dbReference>
<dbReference type="NCBIfam" id="TIGR01509">
    <property type="entry name" value="HAD-SF-IA-v3"/>
    <property type="match status" value="1"/>
</dbReference>
<dbReference type="NCBIfam" id="TIGR01449">
    <property type="entry name" value="PGP_bact"/>
    <property type="match status" value="1"/>
</dbReference>
<dbReference type="NCBIfam" id="NF009695">
    <property type="entry name" value="PRK13222.1-2"/>
    <property type="match status" value="1"/>
</dbReference>
<dbReference type="PANTHER" id="PTHR43434">
    <property type="entry name" value="PHOSPHOGLYCOLATE PHOSPHATASE"/>
    <property type="match status" value="1"/>
</dbReference>
<dbReference type="PANTHER" id="PTHR43434:SF1">
    <property type="entry name" value="PHOSPHOGLYCOLATE PHOSPHATASE"/>
    <property type="match status" value="1"/>
</dbReference>
<dbReference type="Pfam" id="PF13419">
    <property type="entry name" value="HAD_2"/>
    <property type="match status" value="1"/>
</dbReference>
<dbReference type="PRINTS" id="PR00413">
    <property type="entry name" value="HADHALOGNASE"/>
</dbReference>
<dbReference type="SFLD" id="SFLDG01135">
    <property type="entry name" value="C1.5.6:_HAD__Beta-PGM__Phospha"/>
    <property type="match status" value="1"/>
</dbReference>
<dbReference type="SFLD" id="SFLDG01129">
    <property type="entry name" value="C1.5:_HAD__Beta-PGM__Phosphata"/>
    <property type="match status" value="1"/>
</dbReference>
<dbReference type="SUPFAM" id="SSF56784">
    <property type="entry name" value="HAD-like"/>
    <property type="match status" value="1"/>
</dbReference>
<reference key="1">
    <citation type="journal article" date="2010" name="Appl. Environ. Microbiol.">
        <title>The genome sequence of Psychrobacter arcticus 273-4, a psychroactive Siberian permafrost bacterium, reveals mechanisms for adaptation to low-temperature growth.</title>
        <authorList>
            <person name="Ayala-del-Rio H.L."/>
            <person name="Chain P.S."/>
            <person name="Grzymski J.J."/>
            <person name="Ponder M.A."/>
            <person name="Ivanova N."/>
            <person name="Bergholz P.W."/>
            <person name="Di Bartolo G."/>
            <person name="Hauser L."/>
            <person name="Land M."/>
            <person name="Bakermans C."/>
            <person name="Rodrigues D."/>
            <person name="Klappenbach J."/>
            <person name="Zarka D."/>
            <person name="Larimer F."/>
            <person name="Richardson P."/>
            <person name="Murray A."/>
            <person name="Thomashow M."/>
            <person name="Tiedje J.M."/>
        </authorList>
    </citation>
    <scope>NUCLEOTIDE SEQUENCE [LARGE SCALE GENOMIC DNA]</scope>
    <source>
        <strain>DSM 17307 / VKM B-2377 / 273-4</strain>
    </source>
</reference>
<comment type="function">
    <text evidence="1">Specifically catalyzes the dephosphorylation of 2-phosphoglycolate. Is involved in the dissimilation of the intracellular 2-phosphoglycolate formed during the DNA repair of 3'-phosphoglycolate ends, a major class of DNA lesions induced by oxidative stress.</text>
</comment>
<comment type="catalytic activity">
    <reaction evidence="1">
        <text>2-phosphoglycolate + H2O = glycolate + phosphate</text>
        <dbReference type="Rhea" id="RHEA:14369"/>
        <dbReference type="ChEBI" id="CHEBI:15377"/>
        <dbReference type="ChEBI" id="CHEBI:29805"/>
        <dbReference type="ChEBI" id="CHEBI:43474"/>
        <dbReference type="ChEBI" id="CHEBI:58033"/>
        <dbReference type="EC" id="3.1.3.18"/>
    </reaction>
</comment>
<comment type="cofactor">
    <cofactor evidence="1">
        <name>Mg(2+)</name>
        <dbReference type="ChEBI" id="CHEBI:18420"/>
    </cofactor>
</comment>
<comment type="pathway">
    <text evidence="1">Organic acid metabolism; glycolate biosynthesis; glycolate from 2-phosphoglycolate: step 1/1.</text>
</comment>
<comment type="similarity">
    <text evidence="1">Belongs to the HAD-like hydrolase superfamily. CbbY/CbbZ/Gph/YieH family.</text>
</comment>
<organism>
    <name type="scientific">Psychrobacter arcticus (strain DSM 17307 / VKM B-2377 / 273-4)</name>
    <dbReference type="NCBI Taxonomy" id="259536"/>
    <lineage>
        <taxon>Bacteria</taxon>
        <taxon>Pseudomonadati</taxon>
        <taxon>Pseudomonadota</taxon>
        <taxon>Gammaproteobacteria</taxon>
        <taxon>Moraxellales</taxon>
        <taxon>Moraxellaceae</taxon>
        <taxon>Psychrobacter</taxon>
    </lineage>
</organism>